<dbReference type="EC" id="7.1.1.9"/>
<dbReference type="EMBL" id="X66595">
    <property type="protein sequence ID" value="CAA47160.1"/>
    <property type="molecule type" value="Genomic_DNA"/>
</dbReference>
<dbReference type="PIR" id="S42736">
    <property type="entry name" value="S42736"/>
</dbReference>
<dbReference type="SMR" id="P47918"/>
<dbReference type="GO" id="GO:0005743">
    <property type="term" value="C:mitochondrial inner membrane"/>
    <property type="evidence" value="ECO:0007669"/>
    <property type="project" value="UniProtKB-SubCell"/>
</dbReference>
<dbReference type="GO" id="GO:0005507">
    <property type="term" value="F:copper ion binding"/>
    <property type="evidence" value="ECO:0007669"/>
    <property type="project" value="InterPro"/>
</dbReference>
<dbReference type="GO" id="GO:0004129">
    <property type="term" value="F:cytochrome-c oxidase activity"/>
    <property type="evidence" value="ECO:0007669"/>
    <property type="project" value="UniProtKB-EC"/>
</dbReference>
<dbReference type="GO" id="GO:0042773">
    <property type="term" value="P:ATP synthesis coupled electron transport"/>
    <property type="evidence" value="ECO:0007669"/>
    <property type="project" value="TreeGrafter"/>
</dbReference>
<dbReference type="CDD" id="cd13912">
    <property type="entry name" value="CcO_II_C"/>
    <property type="match status" value="1"/>
</dbReference>
<dbReference type="FunFam" id="1.10.287.90:FF:000004">
    <property type="entry name" value="Cytochrome c oxidase subunit 2"/>
    <property type="match status" value="1"/>
</dbReference>
<dbReference type="FunFam" id="2.60.40.420:FF:000001">
    <property type="entry name" value="Cytochrome c oxidase subunit 2"/>
    <property type="match status" value="1"/>
</dbReference>
<dbReference type="Gene3D" id="1.10.287.90">
    <property type="match status" value="1"/>
</dbReference>
<dbReference type="Gene3D" id="2.60.40.420">
    <property type="entry name" value="Cupredoxins - blue copper proteins"/>
    <property type="match status" value="1"/>
</dbReference>
<dbReference type="InterPro" id="IPR045187">
    <property type="entry name" value="CcO_II"/>
</dbReference>
<dbReference type="InterPro" id="IPR002429">
    <property type="entry name" value="CcO_II-like_C"/>
</dbReference>
<dbReference type="InterPro" id="IPR034210">
    <property type="entry name" value="CcO_II_C"/>
</dbReference>
<dbReference type="InterPro" id="IPR001505">
    <property type="entry name" value="Copper_CuA"/>
</dbReference>
<dbReference type="InterPro" id="IPR008972">
    <property type="entry name" value="Cupredoxin"/>
</dbReference>
<dbReference type="InterPro" id="IPR014222">
    <property type="entry name" value="Cyt_c_oxidase_su2"/>
</dbReference>
<dbReference type="InterPro" id="IPR011759">
    <property type="entry name" value="Cyt_c_oxidase_su2_TM_dom"/>
</dbReference>
<dbReference type="InterPro" id="IPR036257">
    <property type="entry name" value="Cyt_c_oxidase_su2_TM_sf"/>
</dbReference>
<dbReference type="NCBIfam" id="TIGR02866">
    <property type="entry name" value="CoxB"/>
    <property type="match status" value="1"/>
</dbReference>
<dbReference type="PANTHER" id="PTHR22888:SF9">
    <property type="entry name" value="CYTOCHROME C OXIDASE SUBUNIT 2"/>
    <property type="match status" value="1"/>
</dbReference>
<dbReference type="PANTHER" id="PTHR22888">
    <property type="entry name" value="CYTOCHROME C OXIDASE, SUBUNIT II"/>
    <property type="match status" value="1"/>
</dbReference>
<dbReference type="Pfam" id="PF00116">
    <property type="entry name" value="COX2"/>
    <property type="match status" value="1"/>
</dbReference>
<dbReference type="Pfam" id="PF02790">
    <property type="entry name" value="COX2_TM"/>
    <property type="match status" value="1"/>
</dbReference>
<dbReference type="PRINTS" id="PR01166">
    <property type="entry name" value="CYCOXIDASEII"/>
</dbReference>
<dbReference type="SUPFAM" id="SSF49503">
    <property type="entry name" value="Cupredoxins"/>
    <property type="match status" value="1"/>
</dbReference>
<dbReference type="SUPFAM" id="SSF81464">
    <property type="entry name" value="Cytochrome c oxidase subunit II-like, transmembrane region"/>
    <property type="match status" value="1"/>
</dbReference>
<dbReference type="PROSITE" id="PS00078">
    <property type="entry name" value="COX2"/>
    <property type="match status" value="1"/>
</dbReference>
<dbReference type="PROSITE" id="PS50857">
    <property type="entry name" value="COX2_CUA"/>
    <property type="match status" value="1"/>
</dbReference>
<dbReference type="PROSITE" id="PS50999">
    <property type="entry name" value="COX2_TM"/>
    <property type="match status" value="1"/>
</dbReference>
<geneLocation type="mitochondrion"/>
<feature type="chain" id="PRO_0000006045" description="Cytochrome c oxidase subunit 2">
    <location>
        <begin position="1"/>
        <end position="247"/>
    </location>
</feature>
<feature type="topological domain" description="Mitochondrial intermembrane" evidence="3">
    <location>
        <begin position="12"/>
        <end position="38"/>
    </location>
</feature>
<feature type="transmembrane region" description="Helical" evidence="3">
    <location>
        <begin position="39"/>
        <end position="59"/>
    </location>
</feature>
<feature type="topological domain" description="Mitochondrial matrix" evidence="3">
    <location>
        <begin position="60"/>
        <end position="78"/>
    </location>
</feature>
<feature type="transmembrane region" description="Helical" evidence="3">
    <location>
        <begin position="79"/>
        <end position="101"/>
    </location>
</feature>
<feature type="topological domain" description="Mitochondrial intermembrane" evidence="3">
    <location>
        <begin position="102"/>
        <end position="247"/>
    </location>
</feature>
<feature type="binding site" evidence="2">
    <location>
        <position position="182"/>
    </location>
    <ligand>
        <name>Cu cation</name>
        <dbReference type="ChEBI" id="CHEBI:23378"/>
        <label>A1</label>
    </ligand>
</feature>
<feature type="binding site" evidence="2">
    <location>
        <position position="217"/>
    </location>
    <ligand>
        <name>Cu cation</name>
        <dbReference type="ChEBI" id="CHEBI:23378"/>
        <label>A1</label>
    </ligand>
</feature>
<feature type="binding site" evidence="2">
    <location>
        <position position="217"/>
    </location>
    <ligand>
        <name>Cu cation</name>
        <dbReference type="ChEBI" id="CHEBI:23378"/>
        <label>A2</label>
    </ligand>
</feature>
<feature type="binding site" evidence="2">
    <location>
        <position position="219"/>
    </location>
    <ligand>
        <name>Cu cation</name>
        <dbReference type="ChEBI" id="CHEBI:23378"/>
        <label>A2</label>
    </ligand>
</feature>
<feature type="binding site" evidence="2">
    <location>
        <position position="219"/>
    </location>
    <ligand>
        <name>Mg(2+)</name>
        <dbReference type="ChEBI" id="CHEBI:18420"/>
        <note>ligand shared with subunit 1</note>
    </ligand>
</feature>
<feature type="binding site" evidence="2">
    <location>
        <position position="221"/>
    </location>
    <ligand>
        <name>Cu cation</name>
        <dbReference type="ChEBI" id="CHEBI:23378"/>
        <label>A1</label>
    </ligand>
</feature>
<feature type="binding site" evidence="2">
    <location>
        <position position="221"/>
    </location>
    <ligand>
        <name>Cu cation</name>
        <dbReference type="ChEBI" id="CHEBI:23378"/>
        <label>A2</label>
    </ligand>
</feature>
<feature type="binding site" evidence="2">
    <location>
        <position position="225"/>
    </location>
    <ligand>
        <name>Cu cation</name>
        <dbReference type="ChEBI" id="CHEBI:23378"/>
        <label>A2</label>
    </ligand>
</feature>
<feature type="binding site" evidence="2">
    <location>
        <position position="228"/>
    </location>
    <ligand>
        <name>Cu cation</name>
        <dbReference type="ChEBI" id="CHEBI:23378"/>
        <label>A1</label>
    </ligand>
</feature>
<sequence>MLLLINNLILNDVPTPWGLYFQDSSTPNQEGIIELHDNIMFYLVLILCTVSWLLFSIVKDSSKNPLPHKYLVHGQTIEIIWTILPAVVLLIIAFPSFILLYLCDEVISPAMTIKAIGLQWYWRYEYSDFINDSGETIEFESYVIPEDLLEDGQLRLLDTDTSVVCPVNTHIRFIVSAADVIHDFAIPSLGIKVDACPGRLNQVSALIQREGVYYGMCSETCGVAHSAMPIKIEVVSTKEFLTWLNEQ</sequence>
<organism>
    <name type="scientific">Cyberlindnera mrakii</name>
    <name type="common">Yeast</name>
    <name type="synonym">Williopsis mrakii</name>
    <dbReference type="NCBI Taxonomy" id="1004253"/>
    <lineage>
        <taxon>Eukaryota</taxon>
        <taxon>Fungi</taxon>
        <taxon>Dikarya</taxon>
        <taxon>Ascomycota</taxon>
        <taxon>Saccharomycotina</taxon>
        <taxon>Saccharomycetes</taxon>
        <taxon>Phaffomycetales</taxon>
        <taxon>Phaffomycetaceae</taxon>
        <taxon>Cyberlindnera</taxon>
    </lineage>
</organism>
<gene>
    <name type="primary">COX2</name>
</gene>
<accession>P47918</accession>
<keyword id="KW-0186">Copper</keyword>
<keyword id="KW-0249">Electron transport</keyword>
<keyword id="KW-0460">Magnesium</keyword>
<keyword id="KW-0472">Membrane</keyword>
<keyword id="KW-0479">Metal-binding</keyword>
<keyword id="KW-0496">Mitochondrion</keyword>
<keyword id="KW-0999">Mitochondrion inner membrane</keyword>
<keyword id="KW-0679">Respiratory chain</keyword>
<keyword id="KW-1278">Translocase</keyword>
<keyword id="KW-0812">Transmembrane</keyword>
<keyword id="KW-1133">Transmembrane helix</keyword>
<keyword id="KW-0813">Transport</keyword>
<protein>
    <recommendedName>
        <fullName>Cytochrome c oxidase subunit 2</fullName>
        <ecNumber>7.1.1.9</ecNumber>
    </recommendedName>
    <alternativeName>
        <fullName>Cytochrome c oxidase polypeptide II</fullName>
    </alternativeName>
</protein>
<name>COX2_CYBMR</name>
<reference key="1">
    <citation type="journal article" date="1994" name="Yeast">
        <title>Genes of the linear mitochondrial DNA of Williopsis mrakii: coding sequences for a maturase-like protein, a ribosomal protein VAR1 homologue, cytochrome oxidase subunit 2 and methionyl tRNA.</title>
        <authorList>
            <person name="Drissi R."/>
            <person name="Sor F."/>
            <person name="Fukuhara H."/>
        </authorList>
    </citation>
    <scope>NUCLEOTIDE SEQUENCE [GENOMIC DNA]</scope>
    <source>
        <strain>ATCC 10743 / CBS 1707 / JCM 3614 / NBRC 0897 / NRRL Y-1364 / VKM Y-173</strain>
    </source>
</reference>
<comment type="function">
    <text evidence="2">Component of the cytochrome c oxidase, the last enzyme in the mitochondrial electron transport chain which drives oxidative phosphorylation. The respiratory chain contains 3 multisubunit complexes succinate dehydrogenase (complex II, CII), ubiquinol-cytochrome c oxidoreductase (cytochrome b-c1 complex, complex III, CIII) and cytochrome c oxidase (complex IV, CIV), that cooperate to transfer electrons derived from NADH and succinate to molecular oxygen, creating an electrochemical gradient over the inner membrane that drives transmembrane transport and the ATP synthase. Cytochrome c oxidase is the component of the respiratory chain that catalyzes the reduction of oxygen to water. Electrons originating from reduced cytochrome c in the intermembrane space (IMS) are transferred via the dinuclear copper A center (CU(A)) of subunit 2 and heme A of subunit 1 to the active site in subunit 1, a binuclear center (BNC) formed by heme A3 and copper B (CU(B)). The BNC reduces molecular oxygen to 2 water molecules using 4 electrons from cytochrome c in the IMS and 4 protons from the mitochondrial matrix.</text>
</comment>
<comment type="catalytic activity">
    <reaction evidence="2">
        <text>4 Fe(II)-[cytochrome c] + O2 + 8 H(+)(in) = 4 Fe(III)-[cytochrome c] + 2 H2O + 4 H(+)(out)</text>
        <dbReference type="Rhea" id="RHEA:11436"/>
        <dbReference type="Rhea" id="RHEA-COMP:10350"/>
        <dbReference type="Rhea" id="RHEA-COMP:14399"/>
        <dbReference type="ChEBI" id="CHEBI:15377"/>
        <dbReference type="ChEBI" id="CHEBI:15378"/>
        <dbReference type="ChEBI" id="CHEBI:15379"/>
        <dbReference type="ChEBI" id="CHEBI:29033"/>
        <dbReference type="ChEBI" id="CHEBI:29034"/>
        <dbReference type="EC" id="7.1.1.9"/>
    </reaction>
    <physiologicalReaction direction="left-to-right" evidence="2">
        <dbReference type="Rhea" id="RHEA:11437"/>
    </physiologicalReaction>
</comment>
<comment type="cofactor">
    <cofactor evidence="2">
        <name>Cu cation</name>
        <dbReference type="ChEBI" id="CHEBI:23378"/>
    </cofactor>
    <text evidence="2">Binds a dinuclear copper A center per subunit.</text>
</comment>
<comment type="subunit">
    <text evidence="2">Component of the cytochrome c oxidase (complex IV, CIV), a multisubunit enzyme composed of a catalytic core of 3 subunits and several supernumerary subunits. The complex exists as a monomer or a dimer and forms supercomplexes (SCs) in the inner mitochondrial membrane with ubiquinol-cytochrome c oxidoreductase (cytochrome b-c1 complex, complex III, CIII).</text>
</comment>
<comment type="subcellular location">
    <subcellularLocation>
        <location evidence="2">Mitochondrion inner membrane</location>
        <topology evidence="2">Multi-pass membrane protein</topology>
    </subcellularLocation>
</comment>
<comment type="PTM">
    <text evidence="1">The signal sequence of COX2 is processed by IMP1.</text>
</comment>
<comment type="similarity">
    <text evidence="4">Belongs to the cytochrome c oxidase subunit 2 family.</text>
</comment>
<proteinExistence type="inferred from homology"/>
<evidence type="ECO:0000250" key="1"/>
<evidence type="ECO:0000250" key="2">
    <source>
        <dbReference type="UniProtKB" id="P00410"/>
    </source>
</evidence>
<evidence type="ECO:0000255" key="3"/>
<evidence type="ECO:0000305" key="4"/>